<accession>Q9SB89</accession>
<accession>O49530</accession>
<feature type="chain" id="PRO_0000239167" description="DEAD-box ATP-dependent RNA helicase 27">
    <location>
        <begin position="1"/>
        <end position="633"/>
    </location>
</feature>
<feature type="domain" description="Helicase ATP-binding" evidence="2">
    <location>
        <begin position="185"/>
        <end position="360"/>
    </location>
</feature>
<feature type="domain" description="Helicase C-terminal" evidence="3">
    <location>
        <begin position="386"/>
        <end position="534"/>
    </location>
</feature>
<feature type="region of interest" description="Disordered" evidence="4">
    <location>
        <begin position="1"/>
        <end position="147"/>
    </location>
</feature>
<feature type="region of interest" description="Disordered" evidence="4">
    <location>
        <begin position="608"/>
        <end position="633"/>
    </location>
</feature>
<feature type="coiled-coil region" evidence="1">
    <location>
        <begin position="2"/>
        <end position="34"/>
    </location>
</feature>
<feature type="coiled-coil region" evidence="1">
    <location>
        <begin position="117"/>
        <end position="153"/>
    </location>
</feature>
<feature type="short sequence motif" description="Q motif">
    <location>
        <begin position="154"/>
        <end position="182"/>
    </location>
</feature>
<feature type="short sequence motif" description="DEAD box">
    <location>
        <begin position="308"/>
        <end position="311"/>
    </location>
</feature>
<feature type="compositionally biased region" description="Basic and acidic residues" evidence="4">
    <location>
        <begin position="1"/>
        <end position="17"/>
    </location>
</feature>
<feature type="compositionally biased region" description="Acidic residues" evidence="4">
    <location>
        <begin position="37"/>
        <end position="47"/>
    </location>
</feature>
<feature type="compositionally biased region" description="Acidic residues" evidence="4">
    <location>
        <begin position="74"/>
        <end position="83"/>
    </location>
</feature>
<feature type="compositionally biased region" description="Basic residues" evidence="4">
    <location>
        <begin position="88"/>
        <end position="97"/>
    </location>
</feature>
<feature type="compositionally biased region" description="Acidic residues" evidence="4">
    <location>
        <begin position="103"/>
        <end position="114"/>
    </location>
</feature>
<feature type="compositionally biased region" description="Acidic residues" evidence="4">
    <location>
        <begin position="131"/>
        <end position="140"/>
    </location>
</feature>
<feature type="binding site" evidence="2">
    <location>
        <begin position="198"/>
        <end position="205"/>
    </location>
    <ligand>
        <name>ATP</name>
        <dbReference type="ChEBI" id="CHEBI:30616"/>
    </ligand>
</feature>
<sequence length="633" mass="72053">MANLDMEQHSSENEEIKKKKHKKRARDEAKKLKQPAMEEEPDHEDGDAKENNALIDEEPKKKKKKKNKKRGDTDDGEDEAVAEEEPKKKKKKNKKLQQRGDTNDEEDEVIAEEEEPKKKKKKQRKDTEAKSEEEEVEDKEEEKKLEETSIMTNKTFESLSLSDNTYKSIKEMGFARMTQIQAKAIPPLMMGEDVLGAARTGSGKTLAFLIPAVELLYRVKFTPRNGTGVLVICPTRELAIQSYGVAKELLKYHSQTVGKVIGGEKRKTEAEILAKGVNLLVATPGRLLDHLENTNGFIFKNLKFLVMDEADRILEQNFEEDLKKILNLLPKTRQTSLFSATQSAKVEDLARVSLTSPVYIDVDEGRKEVTNEGLEQGYCVVPSAMRLLFLLTFLKRFQGKKKIMVFFSTCKSTKFHAELFRYIKFDCLEIRGGIDQNKRTPTFLQFIKAETGILLCTNVAARGLDFPHVDWIVQYDPPDNPTDYIHRVGRTARGEGAKGKALLVLTPQELKFIQYLKAAKIPVEEHEFEEKKLLDVKPFVENLISENYALKESAKEAYKTYISGYDSHSMKDVFNVHQLNLTEVATSFGFSDPPKVALKIDRGGYRSKREPVNKFKRGRGGGRPGGKSKFERY</sequence>
<proteinExistence type="evidence at transcript level"/>
<reference key="1">
    <citation type="journal article" date="2000" name="DNA Res.">
        <title>Structural analysis of Arabidopsis thaliana chromosome 5. X. Sequence features of the regions of 3,076,755 bp covered by sixty P1 and TAC clones.</title>
        <authorList>
            <person name="Sato S."/>
            <person name="Nakamura Y."/>
            <person name="Kaneko T."/>
            <person name="Katoh T."/>
            <person name="Asamizu E."/>
            <person name="Kotani H."/>
            <person name="Tabata S."/>
        </authorList>
    </citation>
    <scope>NUCLEOTIDE SEQUENCE [LARGE SCALE GENOMIC DNA]</scope>
    <source>
        <strain>cv. Columbia</strain>
    </source>
</reference>
<reference key="2">
    <citation type="journal article" date="2000" name="Nature">
        <title>Sequence and analysis of chromosome 5 of the plant Arabidopsis thaliana.</title>
        <authorList>
            <person name="Tabata S."/>
            <person name="Kaneko T."/>
            <person name="Nakamura Y."/>
            <person name="Kotani H."/>
            <person name="Kato T."/>
            <person name="Asamizu E."/>
            <person name="Miyajima N."/>
            <person name="Sasamoto S."/>
            <person name="Kimura T."/>
            <person name="Hosouchi T."/>
            <person name="Kawashima K."/>
            <person name="Kohara M."/>
            <person name="Matsumoto M."/>
            <person name="Matsuno A."/>
            <person name="Muraki A."/>
            <person name="Nakayama S."/>
            <person name="Nakazaki N."/>
            <person name="Naruo K."/>
            <person name="Okumura S."/>
            <person name="Shinpo S."/>
            <person name="Takeuchi C."/>
            <person name="Wada T."/>
            <person name="Watanabe A."/>
            <person name="Yamada M."/>
            <person name="Yasuda M."/>
            <person name="Sato S."/>
            <person name="de la Bastide M."/>
            <person name="Huang E."/>
            <person name="Spiegel L."/>
            <person name="Gnoj L."/>
            <person name="O'Shaughnessy A."/>
            <person name="Preston R."/>
            <person name="Habermann K."/>
            <person name="Murray J."/>
            <person name="Johnson D."/>
            <person name="Rohlfing T."/>
            <person name="Nelson J."/>
            <person name="Stoneking T."/>
            <person name="Pepin K."/>
            <person name="Spieth J."/>
            <person name="Sekhon M."/>
            <person name="Armstrong J."/>
            <person name="Becker M."/>
            <person name="Belter E."/>
            <person name="Cordum H."/>
            <person name="Cordes M."/>
            <person name="Courtney L."/>
            <person name="Courtney W."/>
            <person name="Dante M."/>
            <person name="Du H."/>
            <person name="Edwards J."/>
            <person name="Fryman J."/>
            <person name="Haakensen B."/>
            <person name="Lamar E."/>
            <person name="Latreille P."/>
            <person name="Leonard S."/>
            <person name="Meyer R."/>
            <person name="Mulvaney E."/>
            <person name="Ozersky P."/>
            <person name="Riley A."/>
            <person name="Strowmatt C."/>
            <person name="Wagner-McPherson C."/>
            <person name="Wollam A."/>
            <person name="Yoakum M."/>
            <person name="Bell M."/>
            <person name="Dedhia N."/>
            <person name="Parnell L."/>
            <person name="Shah R."/>
            <person name="Rodriguez M."/>
            <person name="Hoon See L."/>
            <person name="Vil D."/>
            <person name="Baker J."/>
            <person name="Kirchoff K."/>
            <person name="Toth K."/>
            <person name="King L."/>
            <person name="Bahret A."/>
            <person name="Miller B."/>
            <person name="Marra M.A."/>
            <person name="Martienssen R."/>
            <person name="McCombie W.R."/>
            <person name="Wilson R.K."/>
            <person name="Murphy G."/>
            <person name="Bancroft I."/>
            <person name="Volckaert G."/>
            <person name="Wambutt R."/>
            <person name="Duesterhoeft A."/>
            <person name="Stiekema W."/>
            <person name="Pohl T."/>
            <person name="Entian K.-D."/>
            <person name="Terryn N."/>
            <person name="Hartley N."/>
            <person name="Bent E."/>
            <person name="Johnson S."/>
            <person name="Langham S.-A."/>
            <person name="McCullagh B."/>
            <person name="Robben J."/>
            <person name="Grymonprez B."/>
            <person name="Zimmermann W."/>
            <person name="Ramsperger U."/>
            <person name="Wedler H."/>
            <person name="Balke K."/>
            <person name="Wedler E."/>
            <person name="Peters S."/>
            <person name="van Staveren M."/>
            <person name="Dirkse W."/>
            <person name="Mooijman P."/>
            <person name="Klein Lankhorst R."/>
            <person name="Weitzenegger T."/>
            <person name="Bothe G."/>
            <person name="Rose M."/>
            <person name="Hauf J."/>
            <person name="Berneiser S."/>
            <person name="Hempel S."/>
            <person name="Feldpausch M."/>
            <person name="Lamberth S."/>
            <person name="Villarroel R."/>
            <person name="Gielen J."/>
            <person name="Ardiles W."/>
            <person name="Bents O."/>
            <person name="Lemcke K."/>
            <person name="Kolesov G."/>
            <person name="Mayer K.F.X."/>
            <person name="Rudd S."/>
            <person name="Schoof H."/>
            <person name="Schueller C."/>
            <person name="Zaccaria P."/>
            <person name="Mewes H.-W."/>
            <person name="Bevan M."/>
            <person name="Fransz P.F."/>
        </authorList>
    </citation>
    <scope>NUCLEOTIDE SEQUENCE [LARGE SCALE GENOMIC DNA]</scope>
    <source>
        <strain>cv. Columbia</strain>
    </source>
</reference>
<reference key="3">
    <citation type="journal article" date="2017" name="Plant J.">
        <title>Araport11: a complete reannotation of the Arabidopsis thaliana reference genome.</title>
        <authorList>
            <person name="Cheng C.Y."/>
            <person name="Krishnakumar V."/>
            <person name="Chan A.P."/>
            <person name="Thibaud-Nissen F."/>
            <person name="Schobel S."/>
            <person name="Town C.D."/>
        </authorList>
    </citation>
    <scope>GENOME REANNOTATION</scope>
    <source>
        <strain>cv. Columbia</strain>
    </source>
</reference>
<reference key="4">
    <citation type="journal article" date="2003" name="Science">
        <title>Empirical analysis of transcriptional activity in the Arabidopsis genome.</title>
        <authorList>
            <person name="Yamada K."/>
            <person name="Lim J."/>
            <person name="Dale J.M."/>
            <person name="Chen H."/>
            <person name="Shinn P."/>
            <person name="Palm C.J."/>
            <person name="Southwick A.M."/>
            <person name="Wu H.C."/>
            <person name="Kim C.J."/>
            <person name="Nguyen M."/>
            <person name="Pham P.K."/>
            <person name="Cheuk R.F."/>
            <person name="Karlin-Newmann G."/>
            <person name="Liu S.X."/>
            <person name="Lam B."/>
            <person name="Sakano H."/>
            <person name="Wu T."/>
            <person name="Yu G."/>
            <person name="Miranda M."/>
            <person name="Quach H.L."/>
            <person name="Tripp M."/>
            <person name="Chang C.H."/>
            <person name="Lee J.M."/>
            <person name="Toriumi M.J."/>
            <person name="Chan M.M."/>
            <person name="Tang C.C."/>
            <person name="Onodera C.S."/>
            <person name="Deng J.M."/>
            <person name="Akiyama K."/>
            <person name="Ansari Y."/>
            <person name="Arakawa T."/>
            <person name="Banh J."/>
            <person name="Banno F."/>
            <person name="Bowser L."/>
            <person name="Brooks S.Y."/>
            <person name="Carninci P."/>
            <person name="Chao Q."/>
            <person name="Choy N."/>
            <person name="Enju A."/>
            <person name="Goldsmith A.D."/>
            <person name="Gurjal M."/>
            <person name="Hansen N.F."/>
            <person name="Hayashizaki Y."/>
            <person name="Johnson-Hopson C."/>
            <person name="Hsuan V.W."/>
            <person name="Iida K."/>
            <person name="Karnes M."/>
            <person name="Khan S."/>
            <person name="Koesema E."/>
            <person name="Ishida J."/>
            <person name="Jiang P.X."/>
            <person name="Jones T."/>
            <person name="Kawai J."/>
            <person name="Kamiya A."/>
            <person name="Meyers C."/>
            <person name="Nakajima M."/>
            <person name="Narusaka M."/>
            <person name="Seki M."/>
            <person name="Sakurai T."/>
            <person name="Satou M."/>
            <person name="Tamse R."/>
            <person name="Vaysberg M."/>
            <person name="Wallender E.K."/>
            <person name="Wong C."/>
            <person name="Yamamura Y."/>
            <person name="Yuan S."/>
            <person name="Shinozaki K."/>
            <person name="Davis R.W."/>
            <person name="Theologis A."/>
            <person name="Ecker J.R."/>
        </authorList>
    </citation>
    <scope>NUCLEOTIDE SEQUENCE [LARGE SCALE MRNA]</scope>
    <source>
        <strain>cv. Columbia</strain>
    </source>
</reference>
<reference key="5">
    <citation type="journal article" date="1999" name="Nucleic Acids Res.">
        <title>The DEAD box RNA helicase family in Arabidopsis thaliana.</title>
        <authorList>
            <person name="Aubourg S."/>
            <person name="Kreis M."/>
            <person name="Lecharny A."/>
        </authorList>
    </citation>
    <scope>NUCLEOTIDE SEQUENCE [MRNA] OF 360-540</scope>
    <source>
        <strain>cv. Columbia</strain>
        <tissue>Flower</tissue>
    </source>
</reference>
<reference key="6">
    <citation type="journal article" date="2004" name="Plant Biotechnol. J.">
        <title>DEAD-box RNA helicases in Arabidopsis thaliana: establishing a link between quantitative expression, gene structure and evolution of a family of genes.</title>
        <authorList>
            <person name="Mingam A."/>
            <person name="Toffano-Nioche C."/>
            <person name="Brunaud V."/>
            <person name="Boudet N."/>
            <person name="Kreis M."/>
            <person name="Lecharny A."/>
        </authorList>
    </citation>
    <scope>GENE FAMILY</scope>
    <scope>NOMENCLATURE</scope>
</reference>
<reference key="7">
    <citation type="journal article" date="2013" name="PLoS ONE">
        <title>Genome-wide comparative in silico analysis of the RNA helicase gene family in Zea mays and Glycine max: a comparison with Arabidopsis and Oryza sativa.</title>
        <authorList>
            <person name="Xu R."/>
            <person name="Zhang S."/>
            <person name="Huang J."/>
            <person name="Zheng C."/>
        </authorList>
    </citation>
    <scope>GENE FAMILY</scope>
</reference>
<protein>
    <recommendedName>
        <fullName>DEAD-box ATP-dependent RNA helicase 27</fullName>
        <ecNumber>3.6.4.13</ecNumber>
    </recommendedName>
</protein>
<keyword id="KW-0067">ATP-binding</keyword>
<keyword id="KW-0175">Coiled coil</keyword>
<keyword id="KW-0347">Helicase</keyword>
<keyword id="KW-0378">Hydrolase</keyword>
<keyword id="KW-0547">Nucleotide-binding</keyword>
<keyword id="KW-1185">Reference proteome</keyword>
<keyword id="KW-0694">RNA-binding</keyword>
<evidence type="ECO:0000255" key="1"/>
<evidence type="ECO:0000255" key="2">
    <source>
        <dbReference type="PROSITE-ProRule" id="PRU00541"/>
    </source>
</evidence>
<evidence type="ECO:0000255" key="3">
    <source>
        <dbReference type="PROSITE-ProRule" id="PRU00542"/>
    </source>
</evidence>
<evidence type="ECO:0000256" key="4">
    <source>
        <dbReference type="SAM" id="MobiDB-lite"/>
    </source>
</evidence>
<evidence type="ECO:0000305" key="5"/>
<comment type="catalytic activity">
    <reaction>
        <text>ATP + H2O = ADP + phosphate + H(+)</text>
        <dbReference type="Rhea" id="RHEA:13065"/>
        <dbReference type="ChEBI" id="CHEBI:15377"/>
        <dbReference type="ChEBI" id="CHEBI:15378"/>
        <dbReference type="ChEBI" id="CHEBI:30616"/>
        <dbReference type="ChEBI" id="CHEBI:43474"/>
        <dbReference type="ChEBI" id="CHEBI:456216"/>
        <dbReference type="EC" id="3.6.4.13"/>
    </reaction>
</comment>
<comment type="domain">
    <text>The Q motif is unique to and characteristic of the DEAD box family of RNA helicases and controls ATP binding and hydrolysis.</text>
</comment>
<comment type="similarity">
    <text evidence="5">Belongs to the DEAD box helicase family. DDX18/HAS1 subfamily.</text>
</comment>
<organism>
    <name type="scientific">Arabidopsis thaliana</name>
    <name type="common">Mouse-ear cress</name>
    <dbReference type="NCBI Taxonomy" id="3702"/>
    <lineage>
        <taxon>Eukaryota</taxon>
        <taxon>Viridiplantae</taxon>
        <taxon>Streptophyta</taxon>
        <taxon>Embryophyta</taxon>
        <taxon>Tracheophyta</taxon>
        <taxon>Spermatophyta</taxon>
        <taxon>Magnoliopsida</taxon>
        <taxon>eudicotyledons</taxon>
        <taxon>Gunneridae</taxon>
        <taxon>Pentapetalae</taxon>
        <taxon>rosids</taxon>
        <taxon>malvids</taxon>
        <taxon>Brassicales</taxon>
        <taxon>Brassicaceae</taxon>
        <taxon>Camelineae</taxon>
        <taxon>Arabidopsis</taxon>
    </lineage>
</organism>
<name>RH27_ARATH</name>
<gene>
    <name type="primary">RH27</name>
    <name type="ordered locus">At5g65900</name>
    <name type="ORF">F6H11.20</name>
    <name type="ORF">K14B20.7</name>
</gene>
<dbReference type="EC" id="3.6.4.13"/>
<dbReference type="EMBL" id="AB018108">
    <property type="protein sequence ID" value="BAB11137.1"/>
    <property type="molecule type" value="Genomic_DNA"/>
</dbReference>
<dbReference type="EMBL" id="AL021684">
    <property type="protein sequence ID" value="CAA16673.1"/>
    <property type="molecule type" value="Genomic_DNA"/>
</dbReference>
<dbReference type="EMBL" id="CP002688">
    <property type="protein sequence ID" value="AED98121.1"/>
    <property type="molecule type" value="Genomic_DNA"/>
</dbReference>
<dbReference type="EMBL" id="AY059930">
    <property type="protein sequence ID" value="AAL24412.1"/>
    <property type="molecule type" value="mRNA"/>
</dbReference>
<dbReference type="EMBL" id="BT001188">
    <property type="protein sequence ID" value="AAN65075.1"/>
    <property type="molecule type" value="mRNA"/>
</dbReference>
<dbReference type="EMBL" id="AJ012745">
    <property type="protein sequence ID" value="CAA10162.1"/>
    <property type="molecule type" value="mRNA"/>
</dbReference>
<dbReference type="PIR" id="T05883">
    <property type="entry name" value="T05883"/>
</dbReference>
<dbReference type="PIR" id="T51352">
    <property type="entry name" value="T51352"/>
</dbReference>
<dbReference type="RefSeq" id="NP_201391.1">
    <property type="nucleotide sequence ID" value="NM_125987.3"/>
</dbReference>
<dbReference type="SMR" id="Q9SB89"/>
<dbReference type="FunCoup" id="Q9SB89">
    <property type="interactions" value="3711"/>
</dbReference>
<dbReference type="STRING" id="3702.Q9SB89"/>
<dbReference type="iPTMnet" id="Q9SB89"/>
<dbReference type="PaxDb" id="3702-AT5G65900.1"/>
<dbReference type="ProteomicsDB" id="236976"/>
<dbReference type="EnsemblPlants" id="AT5G65900.1">
    <property type="protein sequence ID" value="AT5G65900.1"/>
    <property type="gene ID" value="AT5G65900"/>
</dbReference>
<dbReference type="GeneID" id="836719"/>
<dbReference type="Gramene" id="AT5G65900.1">
    <property type="protein sequence ID" value="AT5G65900.1"/>
    <property type="gene ID" value="AT5G65900"/>
</dbReference>
<dbReference type="KEGG" id="ath:AT5G65900"/>
<dbReference type="Araport" id="AT5G65900"/>
<dbReference type="TAIR" id="AT5G65900"/>
<dbReference type="eggNOG" id="KOG0342">
    <property type="taxonomic scope" value="Eukaryota"/>
</dbReference>
<dbReference type="HOGENOM" id="CLU_003041_26_5_1"/>
<dbReference type="InParanoid" id="Q9SB89"/>
<dbReference type="OMA" id="YILNRSA"/>
<dbReference type="PhylomeDB" id="Q9SB89"/>
<dbReference type="CD-CODE" id="4299E36E">
    <property type="entry name" value="Nucleolus"/>
</dbReference>
<dbReference type="PRO" id="PR:Q9SB89"/>
<dbReference type="Proteomes" id="UP000006548">
    <property type="component" value="Chromosome 5"/>
</dbReference>
<dbReference type="ExpressionAtlas" id="Q9SB89">
    <property type="expression patterns" value="baseline and differential"/>
</dbReference>
<dbReference type="GO" id="GO:0005634">
    <property type="term" value="C:nucleus"/>
    <property type="evidence" value="ECO:0000314"/>
    <property type="project" value="TAIR"/>
</dbReference>
<dbReference type="GO" id="GO:0005524">
    <property type="term" value="F:ATP binding"/>
    <property type="evidence" value="ECO:0007669"/>
    <property type="project" value="UniProtKB-KW"/>
</dbReference>
<dbReference type="GO" id="GO:0016887">
    <property type="term" value="F:ATP hydrolysis activity"/>
    <property type="evidence" value="ECO:0007669"/>
    <property type="project" value="RHEA"/>
</dbReference>
<dbReference type="GO" id="GO:0003723">
    <property type="term" value="F:RNA binding"/>
    <property type="evidence" value="ECO:0000314"/>
    <property type="project" value="TAIR"/>
</dbReference>
<dbReference type="GO" id="GO:0003724">
    <property type="term" value="F:RNA helicase activity"/>
    <property type="evidence" value="ECO:0007669"/>
    <property type="project" value="UniProtKB-EC"/>
</dbReference>
<dbReference type="GO" id="GO:0048866">
    <property type="term" value="P:stem cell fate specification"/>
    <property type="evidence" value="ECO:0000315"/>
    <property type="project" value="TAIR"/>
</dbReference>
<dbReference type="CDD" id="cd17942">
    <property type="entry name" value="DEADc_DDX18"/>
    <property type="match status" value="1"/>
</dbReference>
<dbReference type="CDD" id="cd18787">
    <property type="entry name" value="SF2_C_DEAD"/>
    <property type="match status" value="1"/>
</dbReference>
<dbReference type="FunFam" id="3.40.50.300:FF:000379">
    <property type="entry name" value="RNA helicase"/>
    <property type="match status" value="1"/>
</dbReference>
<dbReference type="Gene3D" id="3.40.50.300">
    <property type="entry name" value="P-loop containing nucleotide triphosphate hydrolases"/>
    <property type="match status" value="2"/>
</dbReference>
<dbReference type="InterPro" id="IPR044773">
    <property type="entry name" value="DDX18/Has1_DEADc"/>
</dbReference>
<dbReference type="InterPro" id="IPR011545">
    <property type="entry name" value="DEAD/DEAH_box_helicase_dom"/>
</dbReference>
<dbReference type="InterPro" id="IPR014001">
    <property type="entry name" value="Helicase_ATP-bd"/>
</dbReference>
<dbReference type="InterPro" id="IPR001650">
    <property type="entry name" value="Helicase_C-like"/>
</dbReference>
<dbReference type="InterPro" id="IPR027417">
    <property type="entry name" value="P-loop_NTPase"/>
</dbReference>
<dbReference type="InterPro" id="IPR000629">
    <property type="entry name" value="RNA-helicase_DEAD-box_CS"/>
</dbReference>
<dbReference type="InterPro" id="IPR014014">
    <property type="entry name" value="RNA_helicase_DEAD_Q_motif"/>
</dbReference>
<dbReference type="InterPro" id="IPR025313">
    <property type="entry name" value="SPB4-like_CTE"/>
</dbReference>
<dbReference type="PANTHER" id="PTHR24031">
    <property type="entry name" value="RNA HELICASE"/>
    <property type="match status" value="1"/>
</dbReference>
<dbReference type="Pfam" id="PF13959">
    <property type="entry name" value="CTE_SPB4"/>
    <property type="match status" value="1"/>
</dbReference>
<dbReference type="Pfam" id="PF00270">
    <property type="entry name" value="DEAD"/>
    <property type="match status" value="1"/>
</dbReference>
<dbReference type="Pfam" id="PF00271">
    <property type="entry name" value="Helicase_C"/>
    <property type="match status" value="1"/>
</dbReference>
<dbReference type="SMART" id="SM00487">
    <property type="entry name" value="DEXDc"/>
    <property type="match status" value="1"/>
</dbReference>
<dbReference type="SMART" id="SM01178">
    <property type="entry name" value="DUF4217"/>
    <property type="match status" value="1"/>
</dbReference>
<dbReference type="SMART" id="SM00490">
    <property type="entry name" value="HELICc"/>
    <property type="match status" value="1"/>
</dbReference>
<dbReference type="SUPFAM" id="SSF52540">
    <property type="entry name" value="P-loop containing nucleoside triphosphate hydrolases"/>
    <property type="match status" value="2"/>
</dbReference>
<dbReference type="PROSITE" id="PS00039">
    <property type="entry name" value="DEAD_ATP_HELICASE"/>
    <property type="match status" value="1"/>
</dbReference>
<dbReference type="PROSITE" id="PS51192">
    <property type="entry name" value="HELICASE_ATP_BIND_1"/>
    <property type="match status" value="1"/>
</dbReference>
<dbReference type="PROSITE" id="PS51194">
    <property type="entry name" value="HELICASE_CTER"/>
    <property type="match status" value="1"/>
</dbReference>
<dbReference type="PROSITE" id="PS51195">
    <property type="entry name" value="Q_MOTIF"/>
    <property type="match status" value="1"/>
</dbReference>